<evidence type="ECO:0000255" key="1">
    <source>
        <dbReference type="HAMAP-Rule" id="MF_01325"/>
    </source>
</evidence>
<evidence type="ECO:0000305" key="2"/>
<sequence length="211" mass="23093">MAKGIIGKKLGMTQIFDDDGNVIPVTVVQAGPCVVIQKKVEERDGYNALQVGFEDVPEHRVNKPLKGHFERAGVKPKKHVKEFMDFPEDLNEGDEITVDIFEEGELVDVTGISKGKGFAGTIKRWNFSRGPMSHGSRFHRAPGSIGAVDASRVFKGQKLPGRMGHDRVTIQNLEVVRVDSEKNLLLIKGSVPGPNKGILTIREAVKKASNA</sequence>
<proteinExistence type="inferred from homology"/>
<comment type="function">
    <text evidence="1">One of the primary rRNA binding proteins, it binds directly near the 3'-end of the 23S rRNA, where it nucleates assembly of the 50S subunit.</text>
</comment>
<comment type="subunit">
    <text evidence="1">Part of the 50S ribosomal subunit. Forms a cluster with proteins L14 and L19.</text>
</comment>
<comment type="similarity">
    <text evidence="1">Belongs to the universal ribosomal protein uL3 family.</text>
</comment>
<feature type="chain" id="PRO_1000165889" description="Large ribosomal subunit protein uL3">
    <location>
        <begin position="1"/>
        <end position="211"/>
    </location>
</feature>
<accession>B8D0C4</accession>
<protein>
    <recommendedName>
        <fullName evidence="1">Large ribosomal subunit protein uL3</fullName>
    </recommendedName>
    <alternativeName>
        <fullName evidence="2">50S ribosomal protein L3</fullName>
    </alternativeName>
</protein>
<reference key="1">
    <citation type="journal article" date="2009" name="PLoS ONE">
        <title>Genome analysis of the anaerobic thermohalophilic bacterium Halothermothrix orenii.</title>
        <authorList>
            <person name="Mavromatis K."/>
            <person name="Ivanova N."/>
            <person name="Anderson I."/>
            <person name="Lykidis A."/>
            <person name="Hooper S.D."/>
            <person name="Sun H."/>
            <person name="Kunin V."/>
            <person name="Lapidus A."/>
            <person name="Hugenholtz P."/>
            <person name="Patel B."/>
            <person name="Kyrpides N.C."/>
        </authorList>
    </citation>
    <scope>NUCLEOTIDE SEQUENCE [LARGE SCALE GENOMIC DNA]</scope>
    <source>
        <strain>H 168 / OCM 544 / DSM 9562</strain>
    </source>
</reference>
<keyword id="KW-1185">Reference proteome</keyword>
<keyword id="KW-0687">Ribonucleoprotein</keyword>
<keyword id="KW-0689">Ribosomal protein</keyword>
<keyword id="KW-0694">RNA-binding</keyword>
<keyword id="KW-0699">rRNA-binding</keyword>
<gene>
    <name evidence="1" type="primary">rplC</name>
    <name type="ordered locus">Hore_01170</name>
</gene>
<organism>
    <name type="scientific">Halothermothrix orenii (strain H 168 / OCM 544 / DSM 9562)</name>
    <dbReference type="NCBI Taxonomy" id="373903"/>
    <lineage>
        <taxon>Bacteria</taxon>
        <taxon>Bacillati</taxon>
        <taxon>Bacillota</taxon>
        <taxon>Clostridia</taxon>
        <taxon>Halanaerobiales</taxon>
        <taxon>Halothermotrichaceae</taxon>
        <taxon>Halothermothrix</taxon>
    </lineage>
</organism>
<dbReference type="EMBL" id="CP001098">
    <property type="protein sequence ID" value="ACL68878.1"/>
    <property type="molecule type" value="Genomic_DNA"/>
</dbReference>
<dbReference type="RefSeq" id="WP_012635076.1">
    <property type="nucleotide sequence ID" value="NC_011899.1"/>
</dbReference>
<dbReference type="SMR" id="B8D0C4"/>
<dbReference type="STRING" id="373903.Hore_01170"/>
<dbReference type="KEGG" id="hor:Hore_01170"/>
<dbReference type="eggNOG" id="COG0087">
    <property type="taxonomic scope" value="Bacteria"/>
</dbReference>
<dbReference type="HOGENOM" id="CLU_044142_4_1_9"/>
<dbReference type="OrthoDB" id="9806135at2"/>
<dbReference type="Proteomes" id="UP000000719">
    <property type="component" value="Chromosome"/>
</dbReference>
<dbReference type="GO" id="GO:0022625">
    <property type="term" value="C:cytosolic large ribosomal subunit"/>
    <property type="evidence" value="ECO:0007669"/>
    <property type="project" value="TreeGrafter"/>
</dbReference>
<dbReference type="GO" id="GO:0019843">
    <property type="term" value="F:rRNA binding"/>
    <property type="evidence" value="ECO:0007669"/>
    <property type="project" value="UniProtKB-UniRule"/>
</dbReference>
<dbReference type="GO" id="GO:0003735">
    <property type="term" value="F:structural constituent of ribosome"/>
    <property type="evidence" value="ECO:0007669"/>
    <property type="project" value="InterPro"/>
</dbReference>
<dbReference type="GO" id="GO:0006412">
    <property type="term" value="P:translation"/>
    <property type="evidence" value="ECO:0007669"/>
    <property type="project" value="UniProtKB-UniRule"/>
</dbReference>
<dbReference type="FunFam" id="2.40.30.10:FF:000004">
    <property type="entry name" value="50S ribosomal protein L3"/>
    <property type="match status" value="1"/>
</dbReference>
<dbReference type="FunFam" id="3.30.160.810:FF:000001">
    <property type="entry name" value="50S ribosomal protein L3"/>
    <property type="match status" value="1"/>
</dbReference>
<dbReference type="Gene3D" id="3.30.160.810">
    <property type="match status" value="1"/>
</dbReference>
<dbReference type="Gene3D" id="2.40.30.10">
    <property type="entry name" value="Translation factors"/>
    <property type="match status" value="1"/>
</dbReference>
<dbReference type="HAMAP" id="MF_01325_B">
    <property type="entry name" value="Ribosomal_uL3_B"/>
    <property type="match status" value="1"/>
</dbReference>
<dbReference type="InterPro" id="IPR000597">
    <property type="entry name" value="Ribosomal_uL3"/>
</dbReference>
<dbReference type="InterPro" id="IPR019927">
    <property type="entry name" value="Ribosomal_uL3_bac/org-type"/>
</dbReference>
<dbReference type="InterPro" id="IPR019926">
    <property type="entry name" value="Ribosomal_uL3_CS"/>
</dbReference>
<dbReference type="InterPro" id="IPR009000">
    <property type="entry name" value="Transl_B-barrel_sf"/>
</dbReference>
<dbReference type="NCBIfam" id="TIGR03625">
    <property type="entry name" value="L3_bact"/>
    <property type="match status" value="1"/>
</dbReference>
<dbReference type="PANTHER" id="PTHR11229">
    <property type="entry name" value="50S RIBOSOMAL PROTEIN L3"/>
    <property type="match status" value="1"/>
</dbReference>
<dbReference type="PANTHER" id="PTHR11229:SF16">
    <property type="entry name" value="LARGE RIBOSOMAL SUBUNIT PROTEIN UL3C"/>
    <property type="match status" value="1"/>
</dbReference>
<dbReference type="Pfam" id="PF00297">
    <property type="entry name" value="Ribosomal_L3"/>
    <property type="match status" value="1"/>
</dbReference>
<dbReference type="SUPFAM" id="SSF50447">
    <property type="entry name" value="Translation proteins"/>
    <property type="match status" value="1"/>
</dbReference>
<dbReference type="PROSITE" id="PS00474">
    <property type="entry name" value="RIBOSOMAL_L3"/>
    <property type="match status" value="1"/>
</dbReference>
<name>RL3_HALOH</name>